<sequence>MSGKLTIITGPMYSGKTTELLSFVEIYKLGKKKVAVFKPKIDSRYHSTMIVSHSGNGVEAHVIERPEEIRKYIEEDTRGVFIDEVQFFSPGLFEVVKDLLDRGIDVFCAGLDLTHKQNPFETTALLLSLADTVIKKKAVCHRCGEYNATLTLKVAGGEEEIDVGGQEKYIAVCRDCYNTLKKRV</sequence>
<keyword id="KW-0067">ATP-binding</keyword>
<keyword id="KW-0963">Cytoplasm</keyword>
<keyword id="KW-0237">DNA synthesis</keyword>
<keyword id="KW-0418">Kinase</keyword>
<keyword id="KW-0479">Metal-binding</keyword>
<keyword id="KW-0547">Nucleotide-binding</keyword>
<keyword id="KW-0808">Transferase</keyword>
<keyword id="KW-0862">Zinc</keyword>
<protein>
    <recommendedName>
        <fullName evidence="1">Thymidine kinase</fullName>
        <ecNumber evidence="1">2.7.1.21</ecNumber>
    </recommendedName>
</protein>
<dbReference type="EC" id="2.7.1.21" evidence="1"/>
<dbReference type="EMBL" id="CP000702">
    <property type="protein sequence ID" value="ABQ46541.1"/>
    <property type="molecule type" value="Genomic_DNA"/>
</dbReference>
<dbReference type="RefSeq" id="WP_011943149.1">
    <property type="nucleotide sequence ID" value="NC_009486.1"/>
</dbReference>
<dbReference type="SMR" id="A5IK18"/>
<dbReference type="STRING" id="390874.Tpet_0519"/>
<dbReference type="KEGG" id="tpt:Tpet_0519"/>
<dbReference type="eggNOG" id="COG1435">
    <property type="taxonomic scope" value="Bacteria"/>
</dbReference>
<dbReference type="HOGENOM" id="CLU_064400_3_0_0"/>
<dbReference type="Proteomes" id="UP000006558">
    <property type="component" value="Chromosome"/>
</dbReference>
<dbReference type="GO" id="GO:0005829">
    <property type="term" value="C:cytosol"/>
    <property type="evidence" value="ECO:0007669"/>
    <property type="project" value="TreeGrafter"/>
</dbReference>
<dbReference type="GO" id="GO:0005524">
    <property type="term" value="F:ATP binding"/>
    <property type="evidence" value="ECO:0007669"/>
    <property type="project" value="UniProtKB-UniRule"/>
</dbReference>
<dbReference type="GO" id="GO:0004797">
    <property type="term" value="F:thymidine kinase activity"/>
    <property type="evidence" value="ECO:0007669"/>
    <property type="project" value="UniProtKB-UniRule"/>
</dbReference>
<dbReference type="GO" id="GO:0008270">
    <property type="term" value="F:zinc ion binding"/>
    <property type="evidence" value="ECO:0007669"/>
    <property type="project" value="UniProtKB-UniRule"/>
</dbReference>
<dbReference type="GO" id="GO:0071897">
    <property type="term" value="P:DNA biosynthetic process"/>
    <property type="evidence" value="ECO:0007669"/>
    <property type="project" value="UniProtKB-KW"/>
</dbReference>
<dbReference type="GO" id="GO:0046104">
    <property type="term" value="P:thymidine metabolic process"/>
    <property type="evidence" value="ECO:0007669"/>
    <property type="project" value="TreeGrafter"/>
</dbReference>
<dbReference type="FunFam" id="3.30.60.20:FF:000086">
    <property type="entry name" value="Thymidine kinase"/>
    <property type="match status" value="1"/>
</dbReference>
<dbReference type="FunFam" id="3.40.50.300:FF:001270">
    <property type="entry name" value="Thymidine kinase"/>
    <property type="match status" value="1"/>
</dbReference>
<dbReference type="Gene3D" id="3.30.60.20">
    <property type="match status" value="1"/>
</dbReference>
<dbReference type="Gene3D" id="3.40.50.300">
    <property type="entry name" value="P-loop containing nucleotide triphosphate hydrolases"/>
    <property type="match status" value="1"/>
</dbReference>
<dbReference type="HAMAP" id="MF_00124">
    <property type="entry name" value="Thymidine_kinase"/>
    <property type="match status" value="1"/>
</dbReference>
<dbReference type="InterPro" id="IPR027417">
    <property type="entry name" value="P-loop_NTPase"/>
</dbReference>
<dbReference type="InterPro" id="IPR001267">
    <property type="entry name" value="Thymidine_kinase"/>
</dbReference>
<dbReference type="InterPro" id="IPR020633">
    <property type="entry name" value="Thymidine_kinase_CS"/>
</dbReference>
<dbReference type="NCBIfam" id="NF003296">
    <property type="entry name" value="PRK04296.1-1"/>
    <property type="match status" value="1"/>
</dbReference>
<dbReference type="PANTHER" id="PTHR11441">
    <property type="entry name" value="THYMIDINE KINASE"/>
    <property type="match status" value="1"/>
</dbReference>
<dbReference type="PANTHER" id="PTHR11441:SF0">
    <property type="entry name" value="THYMIDINE KINASE, CYTOSOLIC"/>
    <property type="match status" value="1"/>
</dbReference>
<dbReference type="Pfam" id="PF00265">
    <property type="entry name" value="TK"/>
    <property type="match status" value="1"/>
</dbReference>
<dbReference type="PIRSF" id="PIRSF035805">
    <property type="entry name" value="TK_cell"/>
    <property type="match status" value="1"/>
</dbReference>
<dbReference type="SUPFAM" id="SSF57716">
    <property type="entry name" value="Glucocorticoid receptor-like (DNA-binding domain)"/>
    <property type="match status" value="1"/>
</dbReference>
<dbReference type="SUPFAM" id="SSF52540">
    <property type="entry name" value="P-loop containing nucleoside triphosphate hydrolases"/>
    <property type="match status" value="1"/>
</dbReference>
<dbReference type="PROSITE" id="PS00603">
    <property type="entry name" value="TK_CELLULAR_TYPE"/>
    <property type="match status" value="1"/>
</dbReference>
<accession>A5IK18</accession>
<feature type="chain" id="PRO_1000018157" description="Thymidine kinase">
    <location>
        <begin position="1"/>
        <end position="184"/>
    </location>
</feature>
<feature type="active site" description="Proton acceptor" evidence="1">
    <location>
        <position position="84"/>
    </location>
</feature>
<feature type="binding site" evidence="1">
    <location>
        <begin position="10"/>
        <end position="17"/>
    </location>
    <ligand>
        <name>ATP</name>
        <dbReference type="ChEBI" id="CHEBI:30616"/>
    </ligand>
</feature>
<feature type="binding site" evidence="1">
    <location>
        <begin position="83"/>
        <end position="86"/>
    </location>
    <ligand>
        <name>ATP</name>
        <dbReference type="ChEBI" id="CHEBI:30616"/>
    </ligand>
</feature>
<feature type="binding site" evidence="1">
    <location>
        <position position="140"/>
    </location>
    <ligand>
        <name>Zn(2+)</name>
        <dbReference type="ChEBI" id="CHEBI:29105"/>
    </ligand>
</feature>
<feature type="binding site" evidence="1">
    <location>
        <position position="143"/>
    </location>
    <ligand>
        <name>Zn(2+)</name>
        <dbReference type="ChEBI" id="CHEBI:29105"/>
    </ligand>
</feature>
<feature type="binding site" evidence="1">
    <location>
        <position position="173"/>
    </location>
    <ligand>
        <name>Zn(2+)</name>
        <dbReference type="ChEBI" id="CHEBI:29105"/>
    </ligand>
</feature>
<feature type="binding site" evidence="1">
    <location>
        <position position="176"/>
    </location>
    <ligand>
        <name>Zn(2+)</name>
        <dbReference type="ChEBI" id="CHEBI:29105"/>
    </ligand>
</feature>
<evidence type="ECO:0000255" key="1">
    <source>
        <dbReference type="HAMAP-Rule" id="MF_00124"/>
    </source>
</evidence>
<gene>
    <name evidence="1" type="primary">tdk</name>
    <name type="ordered locus">Tpet_0519</name>
</gene>
<organism>
    <name type="scientific">Thermotoga petrophila (strain ATCC BAA-488 / DSM 13995 / JCM 10881 / RKU-1)</name>
    <dbReference type="NCBI Taxonomy" id="390874"/>
    <lineage>
        <taxon>Bacteria</taxon>
        <taxon>Thermotogati</taxon>
        <taxon>Thermotogota</taxon>
        <taxon>Thermotogae</taxon>
        <taxon>Thermotogales</taxon>
        <taxon>Thermotogaceae</taxon>
        <taxon>Thermotoga</taxon>
    </lineage>
</organism>
<name>KITH_THEP1</name>
<proteinExistence type="inferred from homology"/>
<reference key="1">
    <citation type="submission" date="2007-05" db="EMBL/GenBank/DDBJ databases">
        <title>Complete sequence of Thermotoga petrophila RKU-1.</title>
        <authorList>
            <consortium name="US DOE Joint Genome Institute"/>
            <person name="Copeland A."/>
            <person name="Lucas S."/>
            <person name="Lapidus A."/>
            <person name="Barry K."/>
            <person name="Glavina del Rio T."/>
            <person name="Dalin E."/>
            <person name="Tice H."/>
            <person name="Pitluck S."/>
            <person name="Sims D."/>
            <person name="Brettin T."/>
            <person name="Bruce D."/>
            <person name="Detter J.C."/>
            <person name="Han C."/>
            <person name="Tapia R."/>
            <person name="Schmutz J."/>
            <person name="Larimer F."/>
            <person name="Land M."/>
            <person name="Hauser L."/>
            <person name="Kyrpides N."/>
            <person name="Mikhailova N."/>
            <person name="Nelson K."/>
            <person name="Gogarten J.P."/>
            <person name="Noll K."/>
            <person name="Richardson P."/>
        </authorList>
    </citation>
    <scope>NUCLEOTIDE SEQUENCE [LARGE SCALE GENOMIC DNA]</scope>
    <source>
        <strain>ATCC BAA-488 / DSM 13995 / JCM 10881 / RKU-1</strain>
    </source>
</reference>
<comment type="catalytic activity">
    <reaction evidence="1">
        <text>thymidine + ATP = dTMP + ADP + H(+)</text>
        <dbReference type="Rhea" id="RHEA:19129"/>
        <dbReference type="ChEBI" id="CHEBI:15378"/>
        <dbReference type="ChEBI" id="CHEBI:17748"/>
        <dbReference type="ChEBI" id="CHEBI:30616"/>
        <dbReference type="ChEBI" id="CHEBI:63528"/>
        <dbReference type="ChEBI" id="CHEBI:456216"/>
        <dbReference type="EC" id="2.7.1.21"/>
    </reaction>
</comment>
<comment type="subunit">
    <text evidence="1">Homotetramer.</text>
</comment>
<comment type="subcellular location">
    <subcellularLocation>
        <location evidence="1">Cytoplasm</location>
    </subcellularLocation>
</comment>
<comment type="similarity">
    <text evidence="1">Belongs to the thymidine kinase family.</text>
</comment>